<proteinExistence type="evidence at protein level"/>
<reference key="1">
    <citation type="journal article" date="2014" name="PLoS Genet.">
        <title>Phylogenetically driven sequencing of extremely halophilic archaea reveals strategies for static and dynamic osmo-response.</title>
        <authorList>
            <person name="Becker E.A."/>
            <person name="Seitzer P.M."/>
            <person name="Tritt A."/>
            <person name="Larsen D."/>
            <person name="Krusor M."/>
            <person name="Yao A.I."/>
            <person name="Wu D."/>
            <person name="Madern D."/>
            <person name="Eisen J.A."/>
            <person name="Darling A.E."/>
            <person name="Facciotti M.T."/>
        </authorList>
    </citation>
    <scope>NUCLEOTIDE SEQUENCE [LARGE SCALE GENOMIC DNA]</scope>
    <source>
        <strain>DSM 18310 / JCM 13924 / TL6</strain>
    </source>
</reference>
<reference key="2">
    <citation type="journal article" date="2017" name="Nat. Chem. Biol.">
        <title>Parallel evolution of non-homologous isofunctional enzymes in methionine biosynthesis.</title>
        <authorList>
            <person name="Bastard K."/>
            <person name="Perret A."/>
            <person name="Mariage A."/>
            <person name="Bessonnet T."/>
            <person name="Pinet-Turpault A."/>
            <person name="Petit J.L."/>
            <person name="Darii E."/>
            <person name="Bazire P."/>
            <person name="Vergne-Vaxelaire C."/>
            <person name="Brewee C."/>
            <person name="Debard A."/>
            <person name="Pellouin V."/>
            <person name="Besnard-Gonnet M."/>
            <person name="Artiguenave F."/>
            <person name="Medigue C."/>
            <person name="Vallenet D."/>
            <person name="Danchin A."/>
            <person name="Zaparucha A."/>
            <person name="Weissenbach J."/>
            <person name="Salanoubat M."/>
            <person name="de Berardinis V."/>
        </authorList>
    </citation>
    <scope>FUNCTION</scope>
    <scope>CATALYTIC ACTIVITY</scope>
</reference>
<name>METXA_HALPT</name>
<protein>
    <recommendedName>
        <fullName evidence="1">Homoserine O-acetyltransferase</fullName>
        <shortName evidence="1 4">HAT</shortName>
        <ecNumber evidence="1 3">2.3.1.31</ecNumber>
    </recommendedName>
    <alternativeName>
        <fullName evidence="1">Homoserine transacetylase</fullName>
        <shortName evidence="1">HTA</shortName>
    </alternativeName>
</protein>
<evidence type="ECO:0000255" key="1">
    <source>
        <dbReference type="HAMAP-Rule" id="MF_00296"/>
    </source>
</evidence>
<evidence type="ECO:0000256" key="2">
    <source>
        <dbReference type="SAM" id="MobiDB-lite"/>
    </source>
</evidence>
<evidence type="ECO:0000269" key="3">
    <source>
    </source>
</evidence>
<evidence type="ECO:0000303" key="4">
    <source>
    </source>
</evidence>
<evidence type="ECO:0000312" key="5">
    <source>
        <dbReference type="EMBL" id="ELZ73690.1"/>
    </source>
</evidence>
<dbReference type="EC" id="2.3.1.31" evidence="1 3"/>
<dbReference type="EMBL" id="AOLG01000008">
    <property type="protein sequence ID" value="ELZ73690.1"/>
    <property type="molecule type" value="Genomic_DNA"/>
</dbReference>
<dbReference type="SMR" id="M0GNC6"/>
<dbReference type="ESTHER" id="halvd-metxa">
    <property type="family name" value="Homoserine_transacetylase"/>
</dbReference>
<dbReference type="PATRIC" id="fig|1227461.3.peg.63"/>
<dbReference type="OrthoDB" id="295172at2157"/>
<dbReference type="UniPathway" id="UPA00051">
    <property type="reaction ID" value="UER00074"/>
</dbReference>
<dbReference type="Proteomes" id="UP000011559">
    <property type="component" value="Unassembled WGS sequence"/>
</dbReference>
<dbReference type="GO" id="GO:0005737">
    <property type="term" value="C:cytoplasm"/>
    <property type="evidence" value="ECO:0007669"/>
    <property type="project" value="UniProtKB-SubCell"/>
</dbReference>
<dbReference type="GO" id="GO:0004414">
    <property type="term" value="F:homoserine O-acetyltransferase activity"/>
    <property type="evidence" value="ECO:0007669"/>
    <property type="project" value="UniProtKB-UniRule"/>
</dbReference>
<dbReference type="GO" id="GO:0009092">
    <property type="term" value="P:homoserine metabolic process"/>
    <property type="evidence" value="ECO:0007669"/>
    <property type="project" value="TreeGrafter"/>
</dbReference>
<dbReference type="GO" id="GO:0009086">
    <property type="term" value="P:methionine biosynthetic process"/>
    <property type="evidence" value="ECO:0007669"/>
    <property type="project" value="UniProtKB-UniRule"/>
</dbReference>
<dbReference type="Gene3D" id="3.40.50.1820">
    <property type="entry name" value="alpha/beta hydrolase"/>
    <property type="match status" value="1"/>
</dbReference>
<dbReference type="HAMAP" id="MF_00296">
    <property type="entry name" value="MetX_acyltransf"/>
    <property type="match status" value="1"/>
</dbReference>
<dbReference type="InterPro" id="IPR000073">
    <property type="entry name" value="AB_hydrolase_1"/>
</dbReference>
<dbReference type="InterPro" id="IPR029058">
    <property type="entry name" value="AB_hydrolase_fold"/>
</dbReference>
<dbReference type="InterPro" id="IPR008220">
    <property type="entry name" value="HAT_MetX-like"/>
</dbReference>
<dbReference type="NCBIfam" id="TIGR01392">
    <property type="entry name" value="homoserO_Ac_trn"/>
    <property type="match status" value="1"/>
</dbReference>
<dbReference type="NCBIfam" id="NF001209">
    <property type="entry name" value="PRK00175.1"/>
    <property type="match status" value="1"/>
</dbReference>
<dbReference type="PANTHER" id="PTHR32268">
    <property type="entry name" value="HOMOSERINE O-ACETYLTRANSFERASE"/>
    <property type="match status" value="1"/>
</dbReference>
<dbReference type="PANTHER" id="PTHR32268:SF11">
    <property type="entry name" value="HOMOSERINE O-ACETYLTRANSFERASE"/>
    <property type="match status" value="1"/>
</dbReference>
<dbReference type="Pfam" id="PF00561">
    <property type="entry name" value="Abhydrolase_1"/>
    <property type="match status" value="1"/>
</dbReference>
<dbReference type="PIRSF" id="PIRSF000443">
    <property type="entry name" value="Homoser_Ac_trans"/>
    <property type="match status" value="1"/>
</dbReference>
<dbReference type="SUPFAM" id="SSF53474">
    <property type="entry name" value="alpha/beta-Hydrolases"/>
    <property type="match status" value="1"/>
</dbReference>
<feature type="chain" id="PRO_0000440283" description="Homoserine O-acetyltransferase">
    <location>
        <begin position="1"/>
        <end position="415"/>
    </location>
</feature>
<feature type="domain" description="AB hydrolase-1" evidence="1">
    <location>
        <begin position="47"/>
        <end position="369"/>
    </location>
</feature>
<feature type="region of interest" description="Disordered" evidence="2">
    <location>
        <begin position="387"/>
        <end position="415"/>
    </location>
</feature>
<feature type="active site" description="Nucleophile" evidence="1">
    <location>
        <position position="155"/>
    </location>
</feature>
<feature type="active site" evidence="1">
    <location>
        <position position="329"/>
    </location>
</feature>
<feature type="active site" evidence="1">
    <location>
        <position position="362"/>
    </location>
</feature>
<feature type="binding site" evidence="1">
    <location>
        <position position="226"/>
    </location>
    <ligand>
        <name>substrate</name>
    </ligand>
</feature>
<feature type="binding site" evidence="1">
    <location>
        <position position="363"/>
    </location>
    <ligand>
        <name>substrate</name>
    </ligand>
</feature>
<comment type="function">
    <text evidence="1 3">Transfers an acetyl group from acetyl-CoA to L-homoserine, forming acetyl-L-homoserine.</text>
</comment>
<comment type="catalytic activity">
    <reaction evidence="1 3">
        <text>L-homoserine + acetyl-CoA = O-acetyl-L-homoserine + CoA</text>
        <dbReference type="Rhea" id="RHEA:13701"/>
        <dbReference type="ChEBI" id="CHEBI:57287"/>
        <dbReference type="ChEBI" id="CHEBI:57288"/>
        <dbReference type="ChEBI" id="CHEBI:57476"/>
        <dbReference type="ChEBI" id="CHEBI:57716"/>
        <dbReference type="EC" id="2.3.1.31"/>
    </reaction>
</comment>
<comment type="pathway">
    <text evidence="1">Amino-acid biosynthesis; L-methionine biosynthesis via de novo pathway; O-acetyl-L-homoserine from L-homoserine: step 1/1.</text>
</comment>
<comment type="subunit">
    <text evidence="1">Homodimer.</text>
</comment>
<comment type="subcellular location">
    <subcellularLocation>
        <location evidence="1">Cytoplasm</location>
    </subcellularLocation>
</comment>
<comment type="similarity">
    <text evidence="1">Belongs to the AB hydrolase superfamily. MetX family.</text>
</comment>
<sequence>MSRTRTTPGRRVESDVVDIGEHEFESGEILPDLKVAYEAYGEFDGQNAVLVCHGLTGSQHVAGHGTESGVSGQARAWWGDIVGPGKALDTNDYYVICVNVPGSCYGTSGPASEGPDGEPWGTDFPPVTVHDWTRAQRRLLDHLGVGRLHAVVGGSVGGMNALDWAVQFPDDVERLAVVASAARLDSQCLGIDAVARRAITSDPNWNGGDYYGEDRATPDAGLGLARQLGHLMYLSKDSMERKFGRRSAGRGDRGDAFPSDPAAAFFPYREVESYLDYQAEKFAERFDANSYLYLTRAMDDFDLSEGYESDAAALAAFEGESLLVSFTGDWHFTTEQSESLAGAFRRVDVPVAHHVVESDHGHDAFLVEPEKVGPPLGDFVDEGVAGRAVTDTATDGGEPDEEEDFAPVHSSLFSR</sequence>
<keyword id="KW-0012">Acyltransferase</keyword>
<keyword id="KW-0028">Amino-acid biosynthesis</keyword>
<keyword id="KW-0963">Cytoplasm</keyword>
<keyword id="KW-0486">Methionine biosynthesis</keyword>
<keyword id="KW-0808">Transferase</keyword>
<accession>M0GNC6</accession>
<organism>
    <name type="scientific">Haloferax prahovense (strain DSM 18310 / JCM 13924 / TL6)</name>
    <dbReference type="NCBI Taxonomy" id="1227461"/>
    <lineage>
        <taxon>Archaea</taxon>
        <taxon>Methanobacteriati</taxon>
        <taxon>Methanobacteriota</taxon>
        <taxon>Stenosarchaea group</taxon>
        <taxon>Halobacteria</taxon>
        <taxon>Halobacteriales</taxon>
        <taxon>Haloferacaceae</taxon>
        <taxon>Haloferax</taxon>
    </lineage>
</organism>
<gene>
    <name evidence="1 4" type="primary">metXA</name>
    <name evidence="5" type="ORF">C457_00345</name>
</gene>